<evidence type="ECO:0000255" key="1">
    <source>
        <dbReference type="HAMAP-Rule" id="MF_00435"/>
    </source>
</evidence>
<evidence type="ECO:0000255" key="2">
    <source>
        <dbReference type="PROSITE-ProRule" id="PRU01197"/>
    </source>
</evidence>
<evidence type="ECO:0000255" key="3">
    <source>
        <dbReference type="PROSITE-ProRule" id="PRU01198"/>
    </source>
</evidence>
<proteinExistence type="inferred from homology"/>
<reference key="1">
    <citation type="journal article" date="2007" name="PLoS ONE">
        <title>A glimpse of streptococcal toxic shock syndrome from comparative genomics of S. suis 2 Chinese isolates.</title>
        <authorList>
            <person name="Chen C."/>
            <person name="Tang J."/>
            <person name="Dong W."/>
            <person name="Wang C."/>
            <person name="Feng Y."/>
            <person name="Wang J."/>
            <person name="Zheng F."/>
            <person name="Pan X."/>
            <person name="Liu D."/>
            <person name="Li M."/>
            <person name="Song Y."/>
            <person name="Zhu X."/>
            <person name="Sun H."/>
            <person name="Feng T."/>
            <person name="Guo Z."/>
            <person name="Ju A."/>
            <person name="Ge J."/>
            <person name="Dong Y."/>
            <person name="Sun W."/>
            <person name="Jiang Y."/>
            <person name="Wang J."/>
            <person name="Yan J."/>
            <person name="Yang H."/>
            <person name="Wang X."/>
            <person name="Gao G.F."/>
            <person name="Yang R."/>
            <person name="Wang J."/>
            <person name="Yu J."/>
        </authorList>
    </citation>
    <scope>NUCLEOTIDE SEQUENCE [LARGE SCALE GENOMIC DNA]</scope>
    <source>
        <strain>05ZYH33</strain>
    </source>
</reference>
<name>ILVC_STRSY</name>
<sequence>MTVTMQYEKDVTVAALDGKRIAVIGYGSQGHAHAQNLRDTGHDVIIGVRAGKSFDKAKEDGFETFEVAEAAKQADVIMILAPDEIQADLYNEEIAPNLEAGNALGFAHGFNVHFEFIKVPADVDVFMCAPKGPGHLVRRTFEEGFGVPALYAVYQDATGNAKHIAMDWAKGVGSARVGLLETTFKEETEEDLFGEQAVLCGGLTALMQAGFEVLTEAGYAPELAYFEVLHEMKLIVDLVYEGGFKKMRQSISNTAEFGDYVSGPRVITDQVKENMKAVLADIQSGKFANDFVNDYKAGRPRMEAYRKEAENLEIEKVGAELRKAMPFVGRNDDDAFKIYN</sequence>
<dbReference type="EC" id="1.1.1.86" evidence="1"/>
<dbReference type="EMBL" id="CP000407">
    <property type="protein sequence ID" value="ABP90852.1"/>
    <property type="molecule type" value="Genomic_DNA"/>
</dbReference>
<dbReference type="SMR" id="A4VXL3"/>
<dbReference type="STRING" id="391295.SSU05_1886"/>
<dbReference type="KEGG" id="ssu:SSU05_1886"/>
<dbReference type="eggNOG" id="COG0059">
    <property type="taxonomic scope" value="Bacteria"/>
</dbReference>
<dbReference type="HOGENOM" id="CLU_033821_0_1_9"/>
<dbReference type="UniPathway" id="UPA00047">
    <property type="reaction ID" value="UER00056"/>
</dbReference>
<dbReference type="UniPathway" id="UPA00049">
    <property type="reaction ID" value="UER00060"/>
</dbReference>
<dbReference type="GO" id="GO:0005829">
    <property type="term" value="C:cytosol"/>
    <property type="evidence" value="ECO:0007669"/>
    <property type="project" value="TreeGrafter"/>
</dbReference>
<dbReference type="GO" id="GO:0004455">
    <property type="term" value="F:ketol-acid reductoisomerase activity"/>
    <property type="evidence" value="ECO:0007669"/>
    <property type="project" value="UniProtKB-UniRule"/>
</dbReference>
<dbReference type="GO" id="GO:0000287">
    <property type="term" value="F:magnesium ion binding"/>
    <property type="evidence" value="ECO:0007669"/>
    <property type="project" value="UniProtKB-UniRule"/>
</dbReference>
<dbReference type="GO" id="GO:0050661">
    <property type="term" value="F:NADP binding"/>
    <property type="evidence" value="ECO:0007669"/>
    <property type="project" value="InterPro"/>
</dbReference>
<dbReference type="GO" id="GO:0009097">
    <property type="term" value="P:isoleucine biosynthetic process"/>
    <property type="evidence" value="ECO:0007669"/>
    <property type="project" value="UniProtKB-UniRule"/>
</dbReference>
<dbReference type="GO" id="GO:0009099">
    <property type="term" value="P:L-valine biosynthetic process"/>
    <property type="evidence" value="ECO:0007669"/>
    <property type="project" value="UniProtKB-UniRule"/>
</dbReference>
<dbReference type="FunFam" id="3.40.50.720:FF:000023">
    <property type="entry name" value="Ketol-acid reductoisomerase (NADP(+))"/>
    <property type="match status" value="1"/>
</dbReference>
<dbReference type="Gene3D" id="6.10.240.10">
    <property type="match status" value="1"/>
</dbReference>
<dbReference type="Gene3D" id="3.40.50.720">
    <property type="entry name" value="NAD(P)-binding Rossmann-like Domain"/>
    <property type="match status" value="1"/>
</dbReference>
<dbReference type="HAMAP" id="MF_00435">
    <property type="entry name" value="IlvC"/>
    <property type="match status" value="1"/>
</dbReference>
<dbReference type="InterPro" id="IPR008927">
    <property type="entry name" value="6-PGluconate_DH-like_C_sf"/>
</dbReference>
<dbReference type="InterPro" id="IPR013023">
    <property type="entry name" value="KARI"/>
</dbReference>
<dbReference type="InterPro" id="IPR000506">
    <property type="entry name" value="KARI_C"/>
</dbReference>
<dbReference type="InterPro" id="IPR013116">
    <property type="entry name" value="KARI_N"/>
</dbReference>
<dbReference type="InterPro" id="IPR014359">
    <property type="entry name" value="KARI_prok"/>
</dbReference>
<dbReference type="InterPro" id="IPR036291">
    <property type="entry name" value="NAD(P)-bd_dom_sf"/>
</dbReference>
<dbReference type="NCBIfam" id="TIGR00465">
    <property type="entry name" value="ilvC"/>
    <property type="match status" value="1"/>
</dbReference>
<dbReference type="NCBIfam" id="NF004017">
    <property type="entry name" value="PRK05479.1"/>
    <property type="match status" value="1"/>
</dbReference>
<dbReference type="NCBIfam" id="NF009940">
    <property type="entry name" value="PRK13403.1"/>
    <property type="match status" value="1"/>
</dbReference>
<dbReference type="PANTHER" id="PTHR21371">
    <property type="entry name" value="KETOL-ACID REDUCTOISOMERASE, MITOCHONDRIAL"/>
    <property type="match status" value="1"/>
</dbReference>
<dbReference type="PANTHER" id="PTHR21371:SF1">
    <property type="entry name" value="KETOL-ACID REDUCTOISOMERASE, MITOCHONDRIAL"/>
    <property type="match status" value="1"/>
</dbReference>
<dbReference type="Pfam" id="PF01450">
    <property type="entry name" value="KARI_C"/>
    <property type="match status" value="1"/>
</dbReference>
<dbReference type="Pfam" id="PF07991">
    <property type="entry name" value="KARI_N"/>
    <property type="match status" value="1"/>
</dbReference>
<dbReference type="PIRSF" id="PIRSF000116">
    <property type="entry name" value="IlvC_gammaproteo"/>
    <property type="match status" value="1"/>
</dbReference>
<dbReference type="SUPFAM" id="SSF48179">
    <property type="entry name" value="6-phosphogluconate dehydrogenase C-terminal domain-like"/>
    <property type="match status" value="1"/>
</dbReference>
<dbReference type="SUPFAM" id="SSF51735">
    <property type="entry name" value="NAD(P)-binding Rossmann-fold domains"/>
    <property type="match status" value="1"/>
</dbReference>
<dbReference type="PROSITE" id="PS51851">
    <property type="entry name" value="KARI_C"/>
    <property type="match status" value="1"/>
</dbReference>
<dbReference type="PROSITE" id="PS51850">
    <property type="entry name" value="KARI_N"/>
    <property type="match status" value="1"/>
</dbReference>
<gene>
    <name evidence="1" type="primary">ilvC</name>
    <name type="ordered locus">SSU05_1886</name>
</gene>
<accession>A4VXL3</accession>
<comment type="function">
    <text evidence="1">Involved in the biosynthesis of branched-chain amino acids (BCAA). Catalyzes an alkyl-migration followed by a ketol-acid reduction of (S)-2-acetolactate (S2AL) to yield (R)-2,3-dihydroxy-isovalerate. In the isomerase reaction, S2AL is rearranged via a Mg-dependent methyl migration to produce 3-hydroxy-3-methyl-2-ketobutyrate (HMKB). In the reductase reaction, this 2-ketoacid undergoes a metal-dependent reduction by NADPH to yield (R)-2,3-dihydroxy-isovalerate.</text>
</comment>
<comment type="catalytic activity">
    <reaction evidence="1">
        <text>(2R)-2,3-dihydroxy-3-methylbutanoate + NADP(+) = (2S)-2-acetolactate + NADPH + H(+)</text>
        <dbReference type="Rhea" id="RHEA:22068"/>
        <dbReference type="ChEBI" id="CHEBI:15378"/>
        <dbReference type="ChEBI" id="CHEBI:49072"/>
        <dbReference type="ChEBI" id="CHEBI:57783"/>
        <dbReference type="ChEBI" id="CHEBI:58349"/>
        <dbReference type="ChEBI" id="CHEBI:58476"/>
        <dbReference type="EC" id="1.1.1.86"/>
    </reaction>
</comment>
<comment type="catalytic activity">
    <reaction evidence="1">
        <text>(2R,3R)-2,3-dihydroxy-3-methylpentanoate + NADP(+) = (S)-2-ethyl-2-hydroxy-3-oxobutanoate + NADPH + H(+)</text>
        <dbReference type="Rhea" id="RHEA:13493"/>
        <dbReference type="ChEBI" id="CHEBI:15378"/>
        <dbReference type="ChEBI" id="CHEBI:49256"/>
        <dbReference type="ChEBI" id="CHEBI:49258"/>
        <dbReference type="ChEBI" id="CHEBI:57783"/>
        <dbReference type="ChEBI" id="CHEBI:58349"/>
        <dbReference type="EC" id="1.1.1.86"/>
    </reaction>
</comment>
<comment type="cofactor">
    <cofactor evidence="1">
        <name>Mg(2+)</name>
        <dbReference type="ChEBI" id="CHEBI:18420"/>
    </cofactor>
    <text evidence="1">Binds 2 magnesium ions per subunit.</text>
</comment>
<comment type="pathway">
    <text evidence="1">Amino-acid biosynthesis; L-isoleucine biosynthesis; L-isoleucine from 2-oxobutanoate: step 2/4.</text>
</comment>
<comment type="pathway">
    <text evidence="1">Amino-acid biosynthesis; L-valine biosynthesis; L-valine from pyruvate: step 2/4.</text>
</comment>
<comment type="similarity">
    <text evidence="1">Belongs to the ketol-acid reductoisomerase family.</text>
</comment>
<organism>
    <name type="scientific">Streptococcus suis (strain 05ZYH33)</name>
    <dbReference type="NCBI Taxonomy" id="391295"/>
    <lineage>
        <taxon>Bacteria</taxon>
        <taxon>Bacillati</taxon>
        <taxon>Bacillota</taxon>
        <taxon>Bacilli</taxon>
        <taxon>Lactobacillales</taxon>
        <taxon>Streptococcaceae</taxon>
        <taxon>Streptococcus</taxon>
    </lineage>
</organism>
<protein>
    <recommendedName>
        <fullName evidence="1">Ketol-acid reductoisomerase (NADP(+))</fullName>
        <shortName evidence="1">KARI</shortName>
        <ecNumber evidence="1">1.1.1.86</ecNumber>
    </recommendedName>
    <alternativeName>
        <fullName evidence="1">Acetohydroxy-acid isomeroreductase</fullName>
        <shortName evidence="1">AHIR</shortName>
    </alternativeName>
    <alternativeName>
        <fullName evidence="1">Alpha-keto-beta-hydroxylacyl reductoisomerase</fullName>
    </alternativeName>
    <alternativeName>
        <fullName evidence="1">Ketol-acid reductoisomerase type 1</fullName>
    </alternativeName>
    <alternativeName>
        <fullName evidence="1">Ketol-acid reductoisomerase type I</fullName>
    </alternativeName>
</protein>
<keyword id="KW-0028">Amino-acid biosynthesis</keyword>
<keyword id="KW-0100">Branched-chain amino acid biosynthesis</keyword>
<keyword id="KW-0460">Magnesium</keyword>
<keyword id="KW-0479">Metal-binding</keyword>
<keyword id="KW-0521">NADP</keyword>
<keyword id="KW-0560">Oxidoreductase</keyword>
<feature type="chain" id="PRO_1000050581" description="Ketol-acid reductoisomerase (NADP(+))">
    <location>
        <begin position="1"/>
        <end position="340"/>
    </location>
</feature>
<feature type="domain" description="KARI N-terminal Rossmann" evidence="2">
    <location>
        <begin position="1"/>
        <end position="182"/>
    </location>
</feature>
<feature type="domain" description="KARI C-terminal knotted" evidence="3">
    <location>
        <begin position="183"/>
        <end position="328"/>
    </location>
</feature>
<feature type="active site" evidence="1">
    <location>
        <position position="108"/>
    </location>
</feature>
<feature type="binding site" evidence="1">
    <location>
        <begin position="26"/>
        <end position="29"/>
    </location>
    <ligand>
        <name>NADP(+)</name>
        <dbReference type="ChEBI" id="CHEBI:58349"/>
    </ligand>
</feature>
<feature type="binding site" evidence="1">
    <location>
        <position position="49"/>
    </location>
    <ligand>
        <name>NADP(+)</name>
        <dbReference type="ChEBI" id="CHEBI:58349"/>
    </ligand>
</feature>
<feature type="binding site" evidence="1">
    <location>
        <position position="53"/>
    </location>
    <ligand>
        <name>NADP(+)</name>
        <dbReference type="ChEBI" id="CHEBI:58349"/>
    </ligand>
</feature>
<feature type="binding site" evidence="1">
    <location>
        <begin position="83"/>
        <end position="86"/>
    </location>
    <ligand>
        <name>NADP(+)</name>
        <dbReference type="ChEBI" id="CHEBI:58349"/>
    </ligand>
</feature>
<feature type="binding site" evidence="1">
    <location>
        <position position="134"/>
    </location>
    <ligand>
        <name>NADP(+)</name>
        <dbReference type="ChEBI" id="CHEBI:58349"/>
    </ligand>
</feature>
<feature type="binding site" evidence="1">
    <location>
        <position position="191"/>
    </location>
    <ligand>
        <name>Mg(2+)</name>
        <dbReference type="ChEBI" id="CHEBI:18420"/>
        <label>1</label>
    </ligand>
</feature>
<feature type="binding site" evidence="1">
    <location>
        <position position="191"/>
    </location>
    <ligand>
        <name>Mg(2+)</name>
        <dbReference type="ChEBI" id="CHEBI:18420"/>
        <label>2</label>
    </ligand>
</feature>
<feature type="binding site" evidence="1">
    <location>
        <position position="195"/>
    </location>
    <ligand>
        <name>Mg(2+)</name>
        <dbReference type="ChEBI" id="CHEBI:18420"/>
        <label>1</label>
    </ligand>
</feature>
<feature type="binding site" evidence="1">
    <location>
        <position position="227"/>
    </location>
    <ligand>
        <name>Mg(2+)</name>
        <dbReference type="ChEBI" id="CHEBI:18420"/>
        <label>2</label>
    </ligand>
</feature>
<feature type="binding site" evidence="1">
    <location>
        <position position="231"/>
    </location>
    <ligand>
        <name>Mg(2+)</name>
        <dbReference type="ChEBI" id="CHEBI:18420"/>
        <label>2</label>
    </ligand>
</feature>
<feature type="binding site" evidence="1">
    <location>
        <position position="252"/>
    </location>
    <ligand>
        <name>substrate</name>
    </ligand>
</feature>